<proteinExistence type="inferred from homology"/>
<keyword id="KW-0121">Carboxypeptidase</keyword>
<keyword id="KW-1015">Disulfide bond</keyword>
<keyword id="KW-0325">Glycoprotein</keyword>
<keyword id="KW-0378">Hydrolase</keyword>
<keyword id="KW-0645">Protease</keyword>
<keyword id="KW-1185">Reference proteome</keyword>
<keyword id="KW-0732">Signal</keyword>
<keyword id="KW-0926">Vacuole</keyword>
<keyword id="KW-0865">Zymogen</keyword>
<gene>
    <name type="primary">CPYA</name>
    <name type="ORF">MGYG_03599</name>
</gene>
<protein>
    <recommendedName>
        <fullName>Carboxypeptidase Y homolog A</fullName>
        <ecNumber>3.4.16.5</ecNumber>
    </recommendedName>
</protein>
<comment type="function">
    <text evidence="1">Vacuolar carboxypeptidase involved in degradation of small peptides. Digests preferentially peptides containing an aliphatic or hydrophobic residue in P1' position, as well as methionine, leucine or phenylalanine in P1 position of ester substrate (By similarity).</text>
</comment>
<comment type="catalytic activity">
    <reaction evidence="3">
        <text>Release of a C-terminal amino acid with broad specificity.</text>
        <dbReference type="EC" id="3.4.16.5"/>
    </reaction>
</comment>
<comment type="subcellular location">
    <subcellularLocation>
        <location evidence="1">Vacuole</location>
    </subcellularLocation>
</comment>
<comment type="similarity">
    <text evidence="4">Belongs to the peptidase S10 family.</text>
</comment>
<evidence type="ECO:0000250" key="1"/>
<evidence type="ECO:0000255" key="2"/>
<evidence type="ECO:0000255" key="3">
    <source>
        <dbReference type="PROSITE-ProRule" id="PRU10074"/>
    </source>
</evidence>
<evidence type="ECO:0000305" key="4"/>
<dbReference type="EC" id="3.4.16.5"/>
<dbReference type="EMBL" id="DS989824">
    <property type="protein sequence ID" value="EFR00594.1"/>
    <property type="molecule type" value="Genomic_DNA"/>
</dbReference>
<dbReference type="RefSeq" id="XP_003173424.1">
    <property type="nucleotide sequence ID" value="XM_003173376.1"/>
</dbReference>
<dbReference type="SMR" id="E4USS9"/>
<dbReference type="FunCoup" id="E4USS9">
    <property type="interactions" value="842"/>
</dbReference>
<dbReference type="STRING" id="535722.E4USS9"/>
<dbReference type="ESTHER" id="triru-q5j6j0">
    <property type="family name" value="Carboxypeptidase_S10"/>
</dbReference>
<dbReference type="MEROPS" id="S10.001"/>
<dbReference type="GlyCosmos" id="E4USS9">
    <property type="glycosylation" value="2 sites, No reported glycans"/>
</dbReference>
<dbReference type="GeneID" id="10028703"/>
<dbReference type="VEuPathDB" id="FungiDB:MGYG_03599"/>
<dbReference type="eggNOG" id="KOG1282">
    <property type="taxonomic scope" value="Eukaryota"/>
</dbReference>
<dbReference type="HOGENOM" id="CLU_008523_10_4_1"/>
<dbReference type="InParanoid" id="E4USS9"/>
<dbReference type="OMA" id="GDWMKPF"/>
<dbReference type="OrthoDB" id="443318at2759"/>
<dbReference type="Proteomes" id="UP000002669">
    <property type="component" value="Unassembled WGS sequence"/>
</dbReference>
<dbReference type="GO" id="GO:0000324">
    <property type="term" value="C:fungal-type vacuole"/>
    <property type="evidence" value="ECO:0007669"/>
    <property type="project" value="TreeGrafter"/>
</dbReference>
<dbReference type="GO" id="GO:0004185">
    <property type="term" value="F:serine-type carboxypeptidase activity"/>
    <property type="evidence" value="ECO:0007669"/>
    <property type="project" value="UniProtKB-EC"/>
</dbReference>
<dbReference type="GO" id="GO:0006508">
    <property type="term" value="P:proteolysis"/>
    <property type="evidence" value="ECO:0007669"/>
    <property type="project" value="UniProtKB-KW"/>
</dbReference>
<dbReference type="FunFam" id="1.10.287.410:FF:000001">
    <property type="entry name" value="Carboxypeptidase Y"/>
    <property type="match status" value="1"/>
</dbReference>
<dbReference type="Gene3D" id="1.10.287.410">
    <property type="match status" value="1"/>
</dbReference>
<dbReference type="Gene3D" id="3.40.50.1820">
    <property type="entry name" value="alpha/beta hydrolase"/>
    <property type="match status" value="1"/>
</dbReference>
<dbReference type="InterPro" id="IPR029058">
    <property type="entry name" value="AB_hydrolase_fold"/>
</dbReference>
<dbReference type="InterPro" id="IPR001563">
    <property type="entry name" value="Peptidase_S10"/>
</dbReference>
<dbReference type="InterPro" id="IPR018202">
    <property type="entry name" value="Ser_caboxypep_ser_AS"/>
</dbReference>
<dbReference type="PANTHER" id="PTHR11802:SF113">
    <property type="entry name" value="SERINE CARBOXYPEPTIDASE CTSA-4.1"/>
    <property type="match status" value="1"/>
</dbReference>
<dbReference type="PANTHER" id="PTHR11802">
    <property type="entry name" value="SERINE PROTEASE FAMILY S10 SERINE CARBOXYPEPTIDASE"/>
    <property type="match status" value="1"/>
</dbReference>
<dbReference type="Pfam" id="PF00450">
    <property type="entry name" value="Peptidase_S10"/>
    <property type="match status" value="1"/>
</dbReference>
<dbReference type="PRINTS" id="PR00724">
    <property type="entry name" value="CRBOXYPTASEC"/>
</dbReference>
<dbReference type="SUPFAM" id="SSF53474">
    <property type="entry name" value="alpha/beta-Hydrolases"/>
    <property type="match status" value="1"/>
</dbReference>
<dbReference type="PROSITE" id="PS00131">
    <property type="entry name" value="CARBOXYPEPT_SER_SER"/>
    <property type="match status" value="1"/>
</dbReference>
<feature type="signal peptide" evidence="2">
    <location>
        <begin position="1"/>
        <end position="17"/>
    </location>
</feature>
<feature type="propeptide" id="PRO_0000407426" evidence="1">
    <location>
        <begin position="18"/>
        <end position="124"/>
    </location>
</feature>
<feature type="chain" id="PRO_0000407427" description="Carboxypeptidase Y homolog A">
    <location>
        <begin position="125"/>
        <end position="543"/>
    </location>
</feature>
<feature type="active site" evidence="3">
    <location>
        <position position="266"/>
    </location>
</feature>
<feature type="active site" evidence="3">
    <location>
        <position position="458"/>
    </location>
</feature>
<feature type="active site" evidence="3">
    <location>
        <position position="520"/>
    </location>
</feature>
<feature type="glycosylation site" description="N-linked (GlcNAc...) asparagine" evidence="2">
    <location>
        <position position="210"/>
    </location>
</feature>
<feature type="glycosylation site" description="N-linked (GlcNAc...) asparagine" evidence="2">
    <location>
        <position position="509"/>
    </location>
</feature>
<feature type="disulfide bond" evidence="1">
    <location>
        <begin position="179"/>
        <end position="419"/>
    </location>
</feature>
<feature type="disulfide bond" evidence="1">
    <location>
        <begin position="313"/>
        <end position="327"/>
    </location>
</feature>
<feature type="disulfide bond" evidence="1">
    <location>
        <begin position="337"/>
        <end position="360"/>
    </location>
</feature>
<feature type="disulfide bond" evidence="1">
    <location>
        <begin position="344"/>
        <end position="353"/>
    </location>
</feature>
<feature type="disulfide bond" evidence="1">
    <location>
        <begin position="382"/>
        <end position="389"/>
    </location>
</feature>
<accession>E4USS9</accession>
<reference key="1">
    <citation type="journal article" date="2012" name="MBio">
        <title>Comparative genome analysis of Trichophyton rubrum and related dermatophytes reveals candidate genes involved in infection.</title>
        <authorList>
            <person name="Martinez D.A."/>
            <person name="Oliver B.G."/>
            <person name="Graeser Y."/>
            <person name="Goldberg J.M."/>
            <person name="Li W."/>
            <person name="Martinez-Rossi N.M."/>
            <person name="Monod M."/>
            <person name="Shelest E."/>
            <person name="Barton R.C."/>
            <person name="Birch E."/>
            <person name="Brakhage A.A."/>
            <person name="Chen Z."/>
            <person name="Gurr S.J."/>
            <person name="Heiman D."/>
            <person name="Heitman J."/>
            <person name="Kosti I."/>
            <person name="Rossi A."/>
            <person name="Saif S."/>
            <person name="Samalova M."/>
            <person name="Saunders C.W."/>
            <person name="Shea T."/>
            <person name="Summerbell R.C."/>
            <person name="Xu J."/>
            <person name="Young S."/>
            <person name="Zeng Q."/>
            <person name="Birren B.W."/>
            <person name="Cuomo C.A."/>
            <person name="White T.C."/>
        </authorList>
    </citation>
    <scope>NUCLEOTIDE SEQUENCE [LARGE SCALE GENOMIC DNA]</scope>
    <source>
        <strain>ATCC MYA-4604 / CBS 118893</strain>
    </source>
</reference>
<sequence>MKLLTTGLLASAALVAAQEQQVLRADEVFGKAPLPDASIFDETIKQFQSSIEDGISHFWSEMKTNFKDYLPMISLPKKHNRRPDSEWDHVVRGADVESVWVQGADGEKRREIDGKLKNYDLRVKSVDPSQLGIDPGVKQYSGYLDDNDADKHLFYWFFESRNDPKNDPVVLWLNGGPGCSSLTGLFLELGPATIDKNLKVVHNPYSWNSNASVIFLDQPVNVGFSYSGSSVSDTVAAGKDVYALLTLFFKQFPEYATQDFHISGESYAGHYIPVFAAEILSHKNTNINLKSALIGNGLTDPLTQYPHYRPMACGDGGYPAVLDQGTCRSMDNSLERCLSLIETCYSSESAWVCVPAAMYCNSAILAPYQQTGMNPYDVRSKCEDMGSLCYPQLNAITEWLNQKSVMKALGVEVESYESCNSGINRDFLFHGDWMKPFHRLVPSVLEKIPVLIYAGDADFICNWLGNQAWTEALEWPGHKKFTEAKLQDLKIVDNKNKGKKIGQVKSSGNFTFMRIFGAGHMVPLNQPEASLEFFNRWLRGEWH</sequence>
<organism>
    <name type="scientific">Arthroderma gypseum (strain ATCC MYA-4604 / CBS 118893)</name>
    <name type="common">Microsporum gypseum</name>
    <dbReference type="NCBI Taxonomy" id="535722"/>
    <lineage>
        <taxon>Eukaryota</taxon>
        <taxon>Fungi</taxon>
        <taxon>Dikarya</taxon>
        <taxon>Ascomycota</taxon>
        <taxon>Pezizomycotina</taxon>
        <taxon>Eurotiomycetes</taxon>
        <taxon>Eurotiomycetidae</taxon>
        <taxon>Onygenales</taxon>
        <taxon>Arthrodermataceae</taxon>
        <taxon>Nannizzia</taxon>
    </lineage>
</organism>
<name>CBPYA_ARTGP</name>